<proteinExistence type="evidence at transcript level"/>
<keyword id="KW-0025">Alternative splicing</keyword>
<keyword id="KW-0963">Cytoplasm</keyword>
<keyword id="KW-0548">Nucleotidyltransferase</keyword>
<keyword id="KW-1185">Reference proteome</keyword>
<keyword id="KW-0808">Transferase</keyword>
<feature type="chain" id="PRO_0000418387" description="D-ribitol-5-phosphate cytidylyltransferase">
    <location>
        <begin position="1"/>
        <end position="411"/>
    </location>
</feature>
<feature type="site" description="Transition state stabilizer" evidence="2">
    <location>
        <position position="23"/>
    </location>
</feature>
<feature type="site" description="Transition state stabilizer" evidence="2">
    <location>
        <position position="30"/>
    </location>
</feature>
<feature type="site" description="Positions substrate for the nucleophilic attack" evidence="2">
    <location>
        <position position="170"/>
    </location>
</feature>
<feature type="site" description="Positions substrate for the nucleophilic attack" evidence="2">
    <location>
        <position position="228"/>
    </location>
</feature>
<feature type="splice variant" id="VSP_044047" description="In isoform 2." evidence="3">
    <original>K</original>
    <variation>KQ</variation>
    <location>
        <position position="276"/>
    </location>
</feature>
<feature type="splice variant" id="VSP_044048" description="In isoform 2 and isoform 3." evidence="3 4">
    <original>DKVQLQQTVCEGTAIITALIKDRNPALVGQLMVA</original>
    <variation>QTEMCNAIGAVLSTSKPCHSAEKDIFDPM</variation>
    <location>
        <begin position="378"/>
        <end position="411"/>
    </location>
</feature>
<reference key="1">
    <citation type="submission" date="2006-10" db="EMBL/GenBank/DDBJ databases">
        <authorList>
            <consortium name="Sanger Xenopus tropicalis EST/cDNA project"/>
        </authorList>
    </citation>
    <scope>NUCLEOTIDE SEQUENCE [LARGE SCALE MRNA] (ISOFORMS 1 AND 2)</scope>
    <source>
        <tissue>Egg</tissue>
        <tissue>Gastrula</tissue>
    </source>
</reference>
<reference key="2">
    <citation type="journal article" date="2010" name="Science">
        <title>The genome of the Western clawed frog Xenopus tropicalis.</title>
        <authorList>
            <person name="Hellsten U."/>
            <person name="Harland R.M."/>
            <person name="Gilchrist M.J."/>
            <person name="Hendrix D."/>
            <person name="Jurka J."/>
            <person name="Kapitonov V."/>
            <person name="Ovcharenko I."/>
            <person name="Putnam N.H."/>
            <person name="Shu S."/>
            <person name="Taher L."/>
            <person name="Blitz I.L."/>
            <person name="Blumberg B."/>
            <person name="Dichmann D.S."/>
            <person name="Dubchak I."/>
            <person name="Amaya E."/>
            <person name="Detter J.C."/>
            <person name="Fletcher R."/>
            <person name="Gerhard D.S."/>
            <person name="Goodstein D."/>
            <person name="Graves T."/>
            <person name="Grigoriev I.V."/>
            <person name="Grimwood J."/>
            <person name="Kawashima T."/>
            <person name="Lindquist E."/>
            <person name="Lucas S.M."/>
            <person name="Mead P.E."/>
            <person name="Mitros T."/>
            <person name="Ogino H."/>
            <person name="Ohta Y."/>
            <person name="Poliakov A.V."/>
            <person name="Pollet N."/>
            <person name="Robert J."/>
            <person name="Salamov A."/>
            <person name="Sater A.K."/>
            <person name="Schmutz J."/>
            <person name="Terry A."/>
            <person name="Vize P.D."/>
            <person name="Warren W.C."/>
            <person name="Wells D."/>
            <person name="Wills A."/>
            <person name="Wilson R.K."/>
            <person name="Zimmerman L.B."/>
            <person name="Zorn A.M."/>
            <person name="Grainger R."/>
            <person name="Grammer T."/>
            <person name="Khokha M.K."/>
            <person name="Richardson P.M."/>
            <person name="Rokhsar D.S."/>
        </authorList>
    </citation>
    <scope>NUCLEOTIDE SEQUENCE [LARGE SCALE GENOMIC DNA]</scope>
</reference>
<reference key="3">
    <citation type="submission" date="2008-11" db="EMBL/GenBank/DDBJ databases">
        <authorList>
            <consortium name="NIH - Xenopus Gene Collection (XGC) project"/>
        </authorList>
    </citation>
    <scope>NUCLEOTIDE SEQUENCE [LARGE SCALE MRNA] (ISOFORM 3)</scope>
    <source>
        <tissue>Gastrula</tissue>
    </source>
</reference>
<protein>
    <recommendedName>
        <fullName evidence="1">D-ribitol-5-phosphate cytidylyltransferase</fullName>
        <ecNumber evidence="1">2.7.7.40</ecNumber>
    </recommendedName>
    <alternativeName>
        <fullName evidence="1">2-C-methyl-D-erythritol 4-phosphate cytidylyltransferase-like protein</fullName>
    </alternativeName>
    <alternativeName>
        <fullName evidence="1">Isoprenoid synthase domain-containing protein</fullName>
    </alternativeName>
</protein>
<evidence type="ECO:0000250" key="1">
    <source>
        <dbReference type="UniProtKB" id="A4D126"/>
    </source>
</evidence>
<evidence type="ECO:0000250" key="2">
    <source>
        <dbReference type="UniProtKB" id="Q46893"/>
    </source>
</evidence>
<evidence type="ECO:0000303" key="3">
    <source ref="1"/>
</evidence>
<evidence type="ECO:0000303" key="4">
    <source ref="3"/>
</evidence>
<evidence type="ECO:0000305" key="5"/>
<organism>
    <name type="scientific">Xenopus tropicalis</name>
    <name type="common">Western clawed frog</name>
    <name type="synonym">Silurana tropicalis</name>
    <dbReference type="NCBI Taxonomy" id="8364"/>
    <lineage>
        <taxon>Eukaryota</taxon>
        <taxon>Metazoa</taxon>
        <taxon>Chordata</taxon>
        <taxon>Craniata</taxon>
        <taxon>Vertebrata</taxon>
        <taxon>Euteleostomi</taxon>
        <taxon>Amphibia</taxon>
        <taxon>Batrachia</taxon>
        <taxon>Anura</taxon>
        <taxon>Pipoidea</taxon>
        <taxon>Pipidae</taxon>
        <taxon>Xenopodinae</taxon>
        <taxon>Xenopus</taxon>
        <taxon>Silurana</taxon>
    </lineage>
</organism>
<dbReference type="EC" id="2.7.7.40" evidence="1"/>
<dbReference type="EMBL" id="CR855789">
    <property type="protein sequence ID" value="CAJ83376.1"/>
    <property type="molecule type" value="mRNA"/>
</dbReference>
<dbReference type="EMBL" id="CR926258">
    <property type="protein sequence ID" value="CAJ81436.1"/>
    <property type="molecule type" value="mRNA"/>
</dbReference>
<dbReference type="EMBL" id="AAMC01021497">
    <property type="status" value="NOT_ANNOTATED_CDS"/>
    <property type="molecule type" value="Genomic_DNA"/>
</dbReference>
<dbReference type="EMBL" id="AAMC01021498">
    <property type="status" value="NOT_ANNOTATED_CDS"/>
    <property type="molecule type" value="Genomic_DNA"/>
</dbReference>
<dbReference type="EMBL" id="AAMC01021499">
    <property type="status" value="NOT_ANNOTATED_CDS"/>
    <property type="molecule type" value="Genomic_DNA"/>
</dbReference>
<dbReference type="EMBL" id="AAMC01021500">
    <property type="status" value="NOT_ANNOTATED_CDS"/>
    <property type="molecule type" value="Genomic_DNA"/>
</dbReference>
<dbReference type="EMBL" id="AAMC01021501">
    <property type="status" value="NOT_ANNOTATED_CDS"/>
    <property type="molecule type" value="Genomic_DNA"/>
</dbReference>
<dbReference type="EMBL" id="AAMC01021502">
    <property type="status" value="NOT_ANNOTATED_CDS"/>
    <property type="molecule type" value="Genomic_DNA"/>
</dbReference>
<dbReference type="EMBL" id="AAMC01021503">
    <property type="status" value="NOT_ANNOTATED_CDS"/>
    <property type="molecule type" value="Genomic_DNA"/>
</dbReference>
<dbReference type="EMBL" id="BC171103">
    <property type="protein sequence ID" value="AAI71103.1"/>
    <property type="molecule type" value="mRNA"/>
</dbReference>
<dbReference type="RefSeq" id="NP_001016240.1">
    <molecule id="Q28CZ7-2"/>
    <property type="nucleotide sequence ID" value="NM_001016240.1"/>
</dbReference>
<dbReference type="RefSeq" id="XP_012820139.1">
    <molecule id="Q28CZ7-1"/>
    <property type="nucleotide sequence ID" value="XM_012964685.3"/>
</dbReference>
<dbReference type="RefSeq" id="XP_012820140.1">
    <property type="nucleotide sequence ID" value="XM_012964686.2"/>
</dbReference>
<dbReference type="RefSeq" id="XP_017950136.1">
    <molecule id="Q28CZ7-1"/>
    <property type="nucleotide sequence ID" value="XM_018094647.2"/>
</dbReference>
<dbReference type="RefSeq" id="XP_017950137.1">
    <molecule id="Q28CZ7-3"/>
    <property type="nucleotide sequence ID" value="XM_018094648.2"/>
</dbReference>
<dbReference type="SMR" id="Q28CZ7"/>
<dbReference type="FunCoup" id="Q28CZ7">
    <property type="interactions" value="393"/>
</dbReference>
<dbReference type="STRING" id="8364.ENSXETP00000047470"/>
<dbReference type="PaxDb" id="8364-ENSXETP00000049329"/>
<dbReference type="GeneID" id="548994"/>
<dbReference type="KEGG" id="xtr:548994"/>
<dbReference type="AGR" id="Xenbase:XB-GENE-1014860"/>
<dbReference type="CTD" id="729920"/>
<dbReference type="Xenbase" id="XB-GENE-1014860">
    <property type="gene designation" value="crppa"/>
</dbReference>
<dbReference type="eggNOG" id="ENOG502QUUE">
    <property type="taxonomic scope" value="Eukaryota"/>
</dbReference>
<dbReference type="HOGENOM" id="CLU_033636_0_0_1"/>
<dbReference type="InParanoid" id="Q28CZ7"/>
<dbReference type="OrthoDB" id="414267at2759"/>
<dbReference type="TreeFam" id="TF328415"/>
<dbReference type="UniPathway" id="UPA00378"/>
<dbReference type="Proteomes" id="UP000008143">
    <property type="component" value="Chromosome 6"/>
</dbReference>
<dbReference type="Bgee" id="ENSXETG00000022799">
    <property type="expression patterns" value="Expressed in skeletal muscle tissue and 12 other cell types or tissues"/>
</dbReference>
<dbReference type="GO" id="GO:0005829">
    <property type="term" value="C:cytosol"/>
    <property type="evidence" value="ECO:0000250"/>
    <property type="project" value="UniProtKB"/>
</dbReference>
<dbReference type="GO" id="GO:0070567">
    <property type="term" value="F:cytidylyltransferase activity"/>
    <property type="evidence" value="ECO:0000250"/>
    <property type="project" value="UniProtKB"/>
</dbReference>
<dbReference type="GO" id="GO:0047349">
    <property type="term" value="F:D-ribitol-5-phosphate cytidylyltransferase activity"/>
    <property type="evidence" value="ECO:0000250"/>
    <property type="project" value="UniProtKB"/>
</dbReference>
<dbReference type="GO" id="GO:0042803">
    <property type="term" value="F:protein homodimerization activity"/>
    <property type="evidence" value="ECO:0000250"/>
    <property type="project" value="UniProtKB"/>
</dbReference>
<dbReference type="GO" id="GO:0008299">
    <property type="term" value="P:isoprenoid biosynthetic process"/>
    <property type="evidence" value="ECO:0007669"/>
    <property type="project" value="InterPro"/>
</dbReference>
<dbReference type="GO" id="GO:0035269">
    <property type="term" value="P:protein O-linked mannosylation"/>
    <property type="evidence" value="ECO:0000250"/>
    <property type="project" value="UniProtKB"/>
</dbReference>
<dbReference type="CDD" id="cd02516">
    <property type="entry name" value="CDP-ME_synthetase"/>
    <property type="match status" value="1"/>
</dbReference>
<dbReference type="FunFam" id="3.90.550.10:FF:000080">
    <property type="entry name" value="D-ribitol-5-phosphate cytidylyltransferase isoform X1"/>
    <property type="match status" value="1"/>
</dbReference>
<dbReference type="Gene3D" id="3.90.550.10">
    <property type="entry name" value="Spore Coat Polysaccharide Biosynthesis Protein SpsA, Chain A"/>
    <property type="match status" value="1"/>
</dbReference>
<dbReference type="InterPro" id="IPR034683">
    <property type="entry name" value="IspD/TarI"/>
</dbReference>
<dbReference type="InterPro" id="IPR040635">
    <property type="entry name" value="ISPD_C"/>
</dbReference>
<dbReference type="InterPro" id="IPR018294">
    <property type="entry name" value="ISPD_synthase_CS"/>
</dbReference>
<dbReference type="InterPro" id="IPR029044">
    <property type="entry name" value="Nucleotide-diphossugar_trans"/>
</dbReference>
<dbReference type="PANTHER" id="PTHR43015">
    <property type="entry name" value="D-RIBITOL-5-PHOSPHATE CYTIDYLYLTRANSFERASE"/>
    <property type="match status" value="1"/>
</dbReference>
<dbReference type="PANTHER" id="PTHR43015:SF1">
    <property type="entry name" value="D-RIBITOL-5-PHOSPHATE CYTIDYLYLTRANSFERASE"/>
    <property type="match status" value="1"/>
</dbReference>
<dbReference type="Pfam" id="PF01128">
    <property type="entry name" value="IspD"/>
    <property type="match status" value="1"/>
</dbReference>
<dbReference type="Pfam" id="PF18706">
    <property type="entry name" value="ISPD_C"/>
    <property type="match status" value="1"/>
</dbReference>
<dbReference type="SUPFAM" id="SSF53448">
    <property type="entry name" value="Nucleotide-diphospho-sugar transferases"/>
    <property type="match status" value="1"/>
</dbReference>
<dbReference type="PROSITE" id="PS01295">
    <property type="entry name" value="ISPD"/>
    <property type="match status" value="1"/>
</dbReference>
<sequence>MDDAAKDLGRCAVVLPAGGCGERLGSLTPKQFCTVLGRPLISHTLEAFERASWIKDIIVVVASESLDLMKAIIHKYGHQRVTLVKGGETRHRSIFNGLKVFSENHSDDTAIDKPEVVIIHDAVRPFVDEDFLLQVAKSAKQHGAAGAIRPLVSTVIASSSDGFLDYSLERARHRASEMPQAFQYDVIYRAYLQCTDYDLDFGTECLHLALQYSNVKAKLLEGPPDLWKVTYKRDLYAAESVIKESISQQLCIVTNVKKEAIEVGFLLHENLKLHYKVKAVSSSMCKTIHHLQNIFHGQCCNFICINVKDLDFEETQNLVDLLQTTNASISYPLVIVSVHLTTEDSSSGNKLSGVRKLAKEAHKSNILVYGLLINIDQDKVQLQQTVCEGTAIITALIKDRNPALVGQLMVA</sequence>
<name>ISPD_XENTR</name>
<accession>Q28CZ7</accession>
<accession>B7ZU47</accession>
<accession>Q28CQ3</accession>
<comment type="function">
    <text evidence="1">Cytidylyltransferase required for protein O-linked mannosylation (By similarity). Catalyzes the formation of CDP-ribitol nucleotide sugar from D-ribitol 5-phosphate. CDP-ribitol is a substrate of FKTN during the biosynthesis of the phosphorylated O-mannosyl trisaccharide (N-acetylgalactosamine-beta-3-N-acetylglucosamine-beta-4-(phosphate-6-)mannose), a carbohydrate structure present in alpha-dystroglycan (DAG1), which is required for binding laminin G-like domain-containing extracellular proteins with high affinity (By similarity). Shows activity toward other pentose phosphate sugars and mediates formation of CDP-ribulose or CDP-ribose using CTP and ribulose-5-phosphate or ribose-5-phosphate, respectively (By similarity). Not involved in dolichol production (By similarity).</text>
</comment>
<comment type="catalytic activity">
    <reaction evidence="1">
        <text>D-ribitol 5-phosphate + CTP + H(+) = CDP-L-ribitol + diphosphate</text>
        <dbReference type="Rhea" id="RHEA:12456"/>
        <dbReference type="ChEBI" id="CHEBI:15378"/>
        <dbReference type="ChEBI" id="CHEBI:33019"/>
        <dbReference type="ChEBI" id="CHEBI:37563"/>
        <dbReference type="ChEBI" id="CHEBI:57608"/>
        <dbReference type="ChEBI" id="CHEBI:57695"/>
        <dbReference type="EC" id="2.7.7.40"/>
    </reaction>
</comment>
<comment type="catalytic activity">
    <reaction evidence="1">
        <text>D-ribose 5-phosphate + CTP + H(+) = CDP-D-ribose + diphosphate</text>
        <dbReference type="Rhea" id="RHEA:53872"/>
        <dbReference type="ChEBI" id="CHEBI:15378"/>
        <dbReference type="ChEBI" id="CHEBI:33019"/>
        <dbReference type="ChEBI" id="CHEBI:37563"/>
        <dbReference type="ChEBI" id="CHEBI:78346"/>
        <dbReference type="ChEBI" id="CHEBI:137525"/>
    </reaction>
</comment>
<comment type="catalytic activity">
    <reaction evidence="1">
        <text>D-ribulose 5-phosphate + CTP + H(+) = CDP-D-ribulose + diphosphate</text>
        <dbReference type="Rhea" id="RHEA:53612"/>
        <dbReference type="ChEBI" id="CHEBI:15378"/>
        <dbReference type="ChEBI" id="CHEBI:33019"/>
        <dbReference type="ChEBI" id="CHEBI:37563"/>
        <dbReference type="ChEBI" id="CHEBI:58121"/>
        <dbReference type="ChEBI" id="CHEBI:137524"/>
    </reaction>
</comment>
<comment type="pathway">
    <text evidence="1">Protein modification; protein glycosylation.</text>
</comment>
<comment type="subunit">
    <text evidence="1">Homodimer.</text>
</comment>
<comment type="subcellular location">
    <subcellularLocation>
        <location evidence="1">Cytoplasm</location>
        <location evidence="1">Cytosol</location>
    </subcellularLocation>
</comment>
<comment type="alternative products">
    <event type="alternative splicing"/>
    <isoform>
        <id>Q28CZ7-1</id>
        <name>1</name>
        <sequence type="displayed"/>
    </isoform>
    <isoform>
        <id>Q28CZ7-2</id>
        <name>2</name>
        <sequence type="described" ref="VSP_044047 VSP_044048"/>
    </isoform>
    <isoform>
        <id>Q28CZ7-3</id>
        <name>3</name>
        <sequence type="described" ref="VSP_044048"/>
    </isoform>
</comment>
<comment type="similarity">
    <text evidence="5">Belongs to the IspD/TarI cytidylyltransferase family. IspD subfamily.</text>
</comment>
<gene>
    <name type="primary">crppa</name>
    <name evidence="1" type="synonym">ispd</name>
    <name evidence="3" type="ORF">TEgg020n22.1</name>
    <name evidence="3" type="ORF">TGas037c08.1</name>
</gene>